<organism>
    <name type="scientific">Lactococcus lactis subsp. cremoris (strain MG1363)</name>
    <dbReference type="NCBI Taxonomy" id="416870"/>
    <lineage>
        <taxon>Bacteria</taxon>
        <taxon>Bacillati</taxon>
        <taxon>Bacillota</taxon>
        <taxon>Bacilli</taxon>
        <taxon>Lactobacillales</taxon>
        <taxon>Streptococcaceae</taxon>
        <taxon>Lactococcus</taxon>
        <taxon>Lactococcus cremoris subsp. cremoris</taxon>
    </lineage>
</organism>
<accession>A2RNI9</accession>
<gene>
    <name evidence="1" type="primary">argR</name>
    <name type="ordered locus">llmg_2315</name>
</gene>
<keyword id="KW-0028">Amino-acid biosynthesis</keyword>
<keyword id="KW-0055">Arginine biosynthesis</keyword>
<keyword id="KW-0963">Cytoplasm</keyword>
<keyword id="KW-0238">DNA-binding</keyword>
<keyword id="KW-0678">Repressor</keyword>
<keyword id="KW-0804">Transcription</keyword>
<keyword id="KW-0805">Transcription regulation</keyword>
<sequence>MKRDKRLEIIKEIVTNNKILTQEELQSLLLERGVEVTQATLSRDIRKLNIIKKRDKGESFYSFLTSGNSKINSDLQLYFYNFVISAKSVGALVVIRTKLGEADVLANALDDERDSRTDILGTIAGADTLLVICASEKAANILTAEIKYILLG</sequence>
<reference key="1">
    <citation type="journal article" date="2007" name="J. Bacteriol.">
        <title>The complete genome sequence of the lactic acid bacterial paradigm Lactococcus lactis subsp. cremoris MG1363.</title>
        <authorList>
            <person name="Wegmann U."/>
            <person name="O'Connell-Motherway M."/>
            <person name="Zomer A."/>
            <person name="Buist G."/>
            <person name="Shearman C."/>
            <person name="Canchaya C."/>
            <person name="Ventura M."/>
            <person name="Goesmann A."/>
            <person name="Gasson M.J."/>
            <person name="Kuipers O.P."/>
            <person name="van Sinderen D."/>
            <person name="Kok J."/>
        </authorList>
    </citation>
    <scope>NUCLEOTIDE SEQUENCE [LARGE SCALE GENOMIC DNA]</scope>
    <source>
        <strain>MG1363</strain>
    </source>
</reference>
<comment type="function">
    <text evidence="1">Regulates arginine biosynthesis genes.</text>
</comment>
<comment type="pathway">
    <text>Amino-acid biosynthesis; L-arginine biosynthesis [regulation].</text>
</comment>
<comment type="subcellular location">
    <subcellularLocation>
        <location evidence="1">Cytoplasm</location>
    </subcellularLocation>
</comment>
<comment type="similarity">
    <text evidence="1">Belongs to the ArgR family.</text>
</comment>
<evidence type="ECO:0000255" key="1">
    <source>
        <dbReference type="HAMAP-Rule" id="MF_00173"/>
    </source>
</evidence>
<dbReference type="EMBL" id="AM406671">
    <property type="protein sequence ID" value="CAL98879.1"/>
    <property type="molecule type" value="Genomic_DNA"/>
</dbReference>
<dbReference type="RefSeq" id="WP_011835987.1">
    <property type="nucleotide sequence ID" value="NC_009004.1"/>
</dbReference>
<dbReference type="SMR" id="A2RNI9"/>
<dbReference type="STRING" id="416870.llmg_2315"/>
<dbReference type="KEGG" id="llm:llmg_2315"/>
<dbReference type="eggNOG" id="COG1438">
    <property type="taxonomic scope" value="Bacteria"/>
</dbReference>
<dbReference type="HOGENOM" id="CLU_097103_3_0_9"/>
<dbReference type="OrthoDB" id="9807089at2"/>
<dbReference type="PhylomeDB" id="A2RNI9"/>
<dbReference type="UniPathway" id="UPA00068"/>
<dbReference type="Proteomes" id="UP000000364">
    <property type="component" value="Chromosome"/>
</dbReference>
<dbReference type="GO" id="GO:0005737">
    <property type="term" value="C:cytoplasm"/>
    <property type="evidence" value="ECO:0007669"/>
    <property type="project" value="UniProtKB-SubCell"/>
</dbReference>
<dbReference type="GO" id="GO:0034618">
    <property type="term" value="F:arginine binding"/>
    <property type="evidence" value="ECO:0007669"/>
    <property type="project" value="InterPro"/>
</dbReference>
<dbReference type="GO" id="GO:0003677">
    <property type="term" value="F:DNA binding"/>
    <property type="evidence" value="ECO:0007669"/>
    <property type="project" value="UniProtKB-KW"/>
</dbReference>
<dbReference type="GO" id="GO:0003700">
    <property type="term" value="F:DNA-binding transcription factor activity"/>
    <property type="evidence" value="ECO:0007669"/>
    <property type="project" value="UniProtKB-UniRule"/>
</dbReference>
<dbReference type="GO" id="GO:0006526">
    <property type="term" value="P:L-arginine biosynthetic process"/>
    <property type="evidence" value="ECO:0007669"/>
    <property type="project" value="UniProtKB-UniPathway"/>
</dbReference>
<dbReference type="GO" id="GO:0051259">
    <property type="term" value="P:protein complex oligomerization"/>
    <property type="evidence" value="ECO:0007669"/>
    <property type="project" value="InterPro"/>
</dbReference>
<dbReference type="GO" id="GO:1900079">
    <property type="term" value="P:regulation of arginine biosynthetic process"/>
    <property type="evidence" value="ECO:0007669"/>
    <property type="project" value="UniProtKB-UniRule"/>
</dbReference>
<dbReference type="Gene3D" id="3.30.1360.40">
    <property type="match status" value="1"/>
</dbReference>
<dbReference type="Gene3D" id="1.10.10.10">
    <property type="entry name" value="Winged helix-like DNA-binding domain superfamily/Winged helix DNA-binding domain"/>
    <property type="match status" value="1"/>
</dbReference>
<dbReference type="HAMAP" id="MF_00173">
    <property type="entry name" value="Arg_repressor"/>
    <property type="match status" value="1"/>
</dbReference>
<dbReference type="InterPro" id="IPR001669">
    <property type="entry name" value="Arg_repress"/>
</dbReference>
<dbReference type="InterPro" id="IPR020899">
    <property type="entry name" value="Arg_repress_C"/>
</dbReference>
<dbReference type="InterPro" id="IPR036251">
    <property type="entry name" value="Arg_repress_C_sf"/>
</dbReference>
<dbReference type="InterPro" id="IPR020900">
    <property type="entry name" value="Arg_repress_DNA-bd"/>
</dbReference>
<dbReference type="InterPro" id="IPR036388">
    <property type="entry name" value="WH-like_DNA-bd_sf"/>
</dbReference>
<dbReference type="InterPro" id="IPR036390">
    <property type="entry name" value="WH_DNA-bd_sf"/>
</dbReference>
<dbReference type="NCBIfam" id="TIGR01529">
    <property type="entry name" value="argR_whole"/>
    <property type="match status" value="1"/>
</dbReference>
<dbReference type="PANTHER" id="PTHR34471">
    <property type="entry name" value="ARGININE REPRESSOR"/>
    <property type="match status" value="1"/>
</dbReference>
<dbReference type="PANTHER" id="PTHR34471:SF1">
    <property type="entry name" value="ARGININE REPRESSOR"/>
    <property type="match status" value="1"/>
</dbReference>
<dbReference type="Pfam" id="PF01316">
    <property type="entry name" value="Arg_repressor"/>
    <property type="match status" value="1"/>
</dbReference>
<dbReference type="Pfam" id="PF02863">
    <property type="entry name" value="Arg_repressor_C"/>
    <property type="match status" value="1"/>
</dbReference>
<dbReference type="PRINTS" id="PR01467">
    <property type="entry name" value="ARGREPRESSOR"/>
</dbReference>
<dbReference type="SUPFAM" id="SSF55252">
    <property type="entry name" value="C-terminal domain of arginine repressor"/>
    <property type="match status" value="1"/>
</dbReference>
<dbReference type="SUPFAM" id="SSF46785">
    <property type="entry name" value="Winged helix' DNA-binding domain"/>
    <property type="match status" value="1"/>
</dbReference>
<feature type="chain" id="PRO_1000023575" description="Arginine repressor">
    <location>
        <begin position="1"/>
        <end position="152"/>
    </location>
</feature>
<protein>
    <recommendedName>
        <fullName evidence="1">Arginine repressor</fullName>
    </recommendedName>
</protein>
<proteinExistence type="inferred from homology"/>
<name>ARGR_LACLM</name>